<evidence type="ECO:0000255" key="1"/>
<evidence type="ECO:0000256" key="2">
    <source>
        <dbReference type="SAM" id="MobiDB-lite"/>
    </source>
</evidence>
<evidence type="ECO:0000305" key="3"/>
<dbReference type="EMBL" id="AE000516">
    <property type="protein sequence ID" value="AAK45141.1"/>
    <property type="molecule type" value="Genomic_DNA"/>
</dbReference>
<dbReference type="PIR" id="A70780">
    <property type="entry name" value="A70780"/>
</dbReference>
<dbReference type="KEGG" id="mtc:MT0899"/>
<dbReference type="HOGENOM" id="CLU_025436_0_0_11"/>
<dbReference type="Proteomes" id="UP000001020">
    <property type="component" value="Chromosome"/>
</dbReference>
<dbReference type="GO" id="GO:0005886">
    <property type="term" value="C:plasma membrane"/>
    <property type="evidence" value="ECO:0007669"/>
    <property type="project" value="UniProtKB-SubCell"/>
</dbReference>
<dbReference type="GO" id="GO:0022857">
    <property type="term" value="F:transmembrane transporter activity"/>
    <property type="evidence" value="ECO:0007669"/>
    <property type="project" value="InterPro"/>
</dbReference>
<dbReference type="FunFam" id="1.20.1250.20:FF:000362">
    <property type="entry name" value="Major Facilitator Superfamily protein"/>
    <property type="match status" value="1"/>
</dbReference>
<dbReference type="Gene3D" id="1.20.1250.20">
    <property type="entry name" value="MFS general substrate transporter like domains"/>
    <property type="match status" value="1"/>
</dbReference>
<dbReference type="InterPro" id="IPR011701">
    <property type="entry name" value="MFS"/>
</dbReference>
<dbReference type="InterPro" id="IPR036259">
    <property type="entry name" value="MFS_trans_sf"/>
</dbReference>
<dbReference type="PANTHER" id="PTHR23513">
    <property type="entry name" value="INTEGRAL MEMBRANE EFFLUX PROTEIN-RELATED"/>
    <property type="match status" value="1"/>
</dbReference>
<dbReference type="PANTHER" id="PTHR23513:SF18">
    <property type="entry name" value="INTEGRAL MEMBRANE PROTEIN"/>
    <property type="match status" value="1"/>
</dbReference>
<dbReference type="Pfam" id="PF07690">
    <property type="entry name" value="MFS_1"/>
    <property type="match status" value="1"/>
</dbReference>
<dbReference type="SUPFAM" id="SSF103473">
    <property type="entry name" value="MFS general substrate transporter"/>
    <property type="match status" value="1"/>
</dbReference>
<feature type="chain" id="PRO_0000427608" description="Uncharacterized protein MT0899">
    <location>
        <begin position="1"/>
        <end position="559"/>
    </location>
</feature>
<feature type="transmembrane region" description="Helical" evidence="1">
    <location>
        <begin position="128"/>
        <end position="148"/>
    </location>
</feature>
<feature type="transmembrane region" description="Helical" evidence="1">
    <location>
        <begin position="155"/>
        <end position="175"/>
    </location>
</feature>
<feature type="transmembrane region" description="Helical" evidence="1">
    <location>
        <begin position="186"/>
        <end position="206"/>
    </location>
</feature>
<feature type="transmembrane region" description="Helical" evidence="1">
    <location>
        <begin position="208"/>
        <end position="228"/>
    </location>
</feature>
<feature type="transmembrane region" description="Helical" evidence="1">
    <location>
        <begin position="259"/>
        <end position="279"/>
    </location>
</feature>
<feature type="transmembrane region" description="Helical" evidence="1">
    <location>
        <begin position="283"/>
        <end position="303"/>
    </location>
</feature>
<feature type="transmembrane region" description="Helical" evidence="1">
    <location>
        <begin position="358"/>
        <end position="378"/>
    </location>
</feature>
<feature type="transmembrane region" description="Helical" evidence="1">
    <location>
        <begin position="387"/>
        <end position="407"/>
    </location>
</feature>
<feature type="transmembrane region" description="Helical" evidence="1">
    <location>
        <begin position="428"/>
        <end position="448"/>
    </location>
</feature>
<feature type="transmembrane region" description="Helical" evidence="1">
    <location>
        <begin position="490"/>
        <end position="510"/>
    </location>
</feature>
<feature type="transmembrane region" description="Helical" evidence="1">
    <location>
        <begin position="515"/>
        <end position="535"/>
    </location>
</feature>
<feature type="region of interest" description="Disordered" evidence="2">
    <location>
        <begin position="1"/>
        <end position="76"/>
    </location>
</feature>
<feature type="compositionally biased region" description="Basic and acidic residues" evidence="2">
    <location>
        <begin position="1"/>
        <end position="10"/>
    </location>
</feature>
<reference key="1">
    <citation type="journal article" date="2002" name="J. Bacteriol.">
        <title>Whole-genome comparison of Mycobacterium tuberculosis clinical and laboratory strains.</title>
        <authorList>
            <person name="Fleischmann R.D."/>
            <person name="Alland D."/>
            <person name="Eisen J.A."/>
            <person name="Carpenter L."/>
            <person name="White O."/>
            <person name="Peterson J.D."/>
            <person name="DeBoy R.T."/>
            <person name="Dodson R.J."/>
            <person name="Gwinn M.L."/>
            <person name="Haft D.H."/>
            <person name="Hickey E.K."/>
            <person name="Kolonay J.F."/>
            <person name="Nelson W.C."/>
            <person name="Umayam L.A."/>
            <person name="Ermolaeva M.D."/>
            <person name="Salzberg S.L."/>
            <person name="Delcher A."/>
            <person name="Utterback T.R."/>
            <person name="Weidman J.F."/>
            <person name="Khouri H.M."/>
            <person name="Gill J."/>
            <person name="Mikula A."/>
            <person name="Bishai W."/>
            <person name="Jacobs W.R. Jr."/>
            <person name="Venter J.C."/>
            <person name="Fraser C.M."/>
        </authorList>
    </citation>
    <scope>NUCLEOTIDE SEQUENCE [LARGE SCALE GENOMIC DNA]</scope>
    <source>
        <strain>CDC 1551 / Oshkosh</strain>
    </source>
</reference>
<accession>P9WKR4</accession>
<accession>L0T6P7</accession>
<accession>Q10564</accession>
<proteinExistence type="predicted"/>
<sequence length="559" mass="59145">MSGRRGDHPGRMAPTPGRRTRNGSVNGHPGMANYPPDDANYRRSRRPPPMPSANRYLPPLGEQPEPERSRVPPRTTRAGERITVTRAAAMRSREMGSRMYLLVHRAATADGADKSGLTALTWPVMANFAVDSAMAVALANTLFFAAASGESKSRVALYLLITIAPFAVIAPLIGPALDRLQHGRRVALALSFGLRTALAVVLIMNYDGATGSFPSWVLYPCALAMMVFSKSFSVLRSAVTPRVMPPTIDLVRVNSRLTVFGLLGGTIAGGAIAAGVEFVCTHLFQLPGALFVVVAITIAGASLSMRIPRWVEVTSGEVPATLSYHRDRGRLRRRWPEEVKNLGGTLRQPLGRNIITSLWGNCTIKVMVGFLFLYPAFVAKAHEANGWVQLGMLGLIGAAAAVGNFAGNFTSARLQLGRPAVLVVRCTVLVTVLAIAAAVAGSLAATAIATLITAGSSAIAKASLDASLQHDLPEESRASGFGRSESTLQLAWVLGGAVGVLVYTELWVGFTAVSALLILGLAQTIVSFRGDSLIPGLGGNRPVMAEQETTRRGAAVAPQ</sequence>
<organism>
    <name type="scientific">Mycobacterium tuberculosis (strain CDC 1551 / Oshkosh)</name>
    <dbReference type="NCBI Taxonomy" id="83331"/>
    <lineage>
        <taxon>Bacteria</taxon>
        <taxon>Bacillati</taxon>
        <taxon>Actinomycetota</taxon>
        <taxon>Actinomycetes</taxon>
        <taxon>Mycobacteriales</taxon>
        <taxon>Mycobacteriaceae</taxon>
        <taxon>Mycobacterium</taxon>
        <taxon>Mycobacterium tuberculosis complex</taxon>
    </lineage>
</organism>
<protein>
    <recommendedName>
        <fullName>Uncharacterized protein MT0899</fullName>
    </recommendedName>
</protein>
<keyword id="KW-1003">Cell membrane</keyword>
<keyword id="KW-0472">Membrane</keyword>
<keyword id="KW-1185">Reference proteome</keyword>
<keyword id="KW-0812">Transmembrane</keyword>
<keyword id="KW-1133">Transmembrane helix</keyword>
<name>Y876_MYCTO</name>
<gene>
    <name type="ordered locus">MT0899</name>
</gene>
<comment type="subcellular location">
    <subcellularLocation>
        <location evidence="3">Cell membrane</location>
        <topology evidence="3">Multi-pass membrane protein</topology>
    </subcellularLocation>
</comment>
<comment type="similarity">
    <text evidence="3">To M.leprae ML2143.</text>
</comment>